<reference key="1">
    <citation type="journal article" date="2000" name="DNA Res.">
        <title>Structural analysis of Arabidopsis thaliana chromosome 5. X. Sequence features of the regions of 3,076,755 bp covered by sixty P1 and TAC clones.</title>
        <authorList>
            <person name="Sato S."/>
            <person name="Nakamura Y."/>
            <person name="Kaneko T."/>
            <person name="Katoh T."/>
            <person name="Asamizu E."/>
            <person name="Kotani H."/>
            <person name="Tabata S."/>
        </authorList>
    </citation>
    <scope>NUCLEOTIDE SEQUENCE [LARGE SCALE GENOMIC DNA]</scope>
    <source>
        <strain>cv. Columbia</strain>
    </source>
</reference>
<reference key="2">
    <citation type="journal article" date="2017" name="Plant J.">
        <title>Araport11: a complete reannotation of the Arabidopsis thaliana reference genome.</title>
        <authorList>
            <person name="Cheng C.Y."/>
            <person name="Krishnakumar V."/>
            <person name="Chan A.P."/>
            <person name="Thibaud-Nissen F."/>
            <person name="Schobel S."/>
            <person name="Town C.D."/>
        </authorList>
    </citation>
    <scope>GENOME REANNOTATION</scope>
    <source>
        <strain>cv. Columbia</strain>
    </source>
</reference>
<reference key="3">
    <citation type="submission" date="2005-05" db="EMBL/GenBank/DDBJ databases">
        <authorList>
            <person name="Underwood B.A."/>
            <person name="Xiao Y.-L."/>
            <person name="Moskal W.A. Jr."/>
            <person name="Monaghan E.L."/>
            <person name="Wang W."/>
            <person name="Redman J.C."/>
            <person name="Wu H.C."/>
            <person name="Utterback T."/>
            <person name="Town C.D."/>
        </authorList>
    </citation>
    <scope>NUCLEOTIDE SEQUENCE [LARGE SCALE MRNA]</scope>
    <source>
        <strain>cv. Columbia</strain>
    </source>
</reference>
<evidence type="ECO:0000255" key="1">
    <source>
        <dbReference type="PROSITE-ProRule" id="PRU00080"/>
    </source>
</evidence>
<protein>
    <recommendedName>
        <fullName>F-box/kelch-repeat protein At5g51250</fullName>
    </recommendedName>
</protein>
<keyword id="KW-0880">Kelch repeat</keyword>
<keyword id="KW-1185">Reference proteome</keyword>
<keyword id="KW-0677">Repeat</keyword>
<accession>Q9LU49</accession>
<sequence length="368" mass="41475">MSSLPDDLLLSIFARISRLYYPTLSLVSKSFRSLLASPDLYKARSLLGHTESCLYVCFHFDSGPNTHWFTLCRKPDGTLTNDTSKKKKSNGYVLATVPIPHSPPANFSSLVAVGSDIYNIGGSIYLGPSSSSVSILDSQSHMWREAPSLRVELMSHSASVLDRKIYVAGSYKDGNGDSNSCKNLFEVFDTKTQVWHPEPIPCSKTKGIFYSKSACIDGKFHVETTHGVVYAYKEGRWDKAIPTMFGMRASYSFCEINNVLFYIHRGVFRWYDTKLRMWRILKGLLGLPSLPENMFVRLADYGGKMAVLWEEDRPSCGAGGRDEMMIWCAVIALKRHLNFSFWGKVEWFDHVLTVPKQHVFVKALTASL</sequence>
<feature type="chain" id="PRO_0000283278" description="F-box/kelch-repeat protein At5g51250">
    <location>
        <begin position="1"/>
        <end position="368"/>
    </location>
</feature>
<feature type="domain" description="F-box" evidence="1">
    <location>
        <begin position="1"/>
        <end position="44"/>
    </location>
</feature>
<feature type="repeat" description="Kelch 1">
    <location>
        <begin position="116"/>
        <end position="163"/>
    </location>
</feature>
<feature type="repeat" description="Kelch 2">
    <location>
        <begin position="165"/>
        <end position="218"/>
    </location>
</feature>
<feature type="repeat" description="Kelch 3">
    <location>
        <begin position="260"/>
        <end position="304"/>
    </location>
</feature>
<name>FK123_ARATH</name>
<gene>
    <name type="ordered locus">At5g51250</name>
    <name type="ORF">MWD22.20</name>
</gene>
<dbReference type="EMBL" id="AB023044">
    <property type="protein sequence ID" value="BAA97388.1"/>
    <property type="molecule type" value="Genomic_DNA"/>
</dbReference>
<dbReference type="EMBL" id="CP002688">
    <property type="protein sequence ID" value="AED96058.1"/>
    <property type="molecule type" value="Genomic_DNA"/>
</dbReference>
<dbReference type="EMBL" id="DQ056714">
    <property type="protein sequence ID" value="AAY78860.1"/>
    <property type="molecule type" value="mRNA"/>
</dbReference>
<dbReference type="RefSeq" id="NP_199938.1">
    <property type="nucleotide sequence ID" value="NM_124504.1"/>
</dbReference>
<dbReference type="SMR" id="Q9LU49"/>
<dbReference type="BioGRID" id="20444">
    <property type="interactions" value="1"/>
</dbReference>
<dbReference type="FunCoup" id="Q9LU49">
    <property type="interactions" value="1"/>
</dbReference>
<dbReference type="PaxDb" id="3702-AT5G51250.1"/>
<dbReference type="EnsemblPlants" id="AT5G51250.1">
    <property type="protein sequence ID" value="AT5G51250.1"/>
    <property type="gene ID" value="AT5G51250"/>
</dbReference>
<dbReference type="GeneID" id="835199"/>
<dbReference type="Gramene" id="AT5G51250.1">
    <property type="protein sequence ID" value="AT5G51250.1"/>
    <property type="gene ID" value="AT5G51250"/>
</dbReference>
<dbReference type="KEGG" id="ath:AT5G51250"/>
<dbReference type="Araport" id="AT5G51250"/>
<dbReference type="TAIR" id="AT5G51250"/>
<dbReference type="eggNOG" id="KOG1072">
    <property type="taxonomic scope" value="Eukaryota"/>
</dbReference>
<dbReference type="HOGENOM" id="CLU_032521_1_2_1"/>
<dbReference type="InParanoid" id="Q9LU49"/>
<dbReference type="OMA" id="SHEKMIW"/>
<dbReference type="PhylomeDB" id="Q9LU49"/>
<dbReference type="PRO" id="PR:Q9LU49"/>
<dbReference type="Proteomes" id="UP000006548">
    <property type="component" value="Chromosome 5"/>
</dbReference>
<dbReference type="ExpressionAtlas" id="Q9LU49">
    <property type="expression patterns" value="baseline and differential"/>
</dbReference>
<dbReference type="CDD" id="cd22152">
    <property type="entry name" value="F-box_AtAFR-like"/>
    <property type="match status" value="1"/>
</dbReference>
<dbReference type="Gene3D" id="1.20.1280.50">
    <property type="match status" value="1"/>
</dbReference>
<dbReference type="Gene3D" id="2.120.10.80">
    <property type="entry name" value="Kelch-type beta propeller"/>
    <property type="match status" value="1"/>
</dbReference>
<dbReference type="InterPro" id="IPR036047">
    <property type="entry name" value="F-box-like_dom_sf"/>
</dbReference>
<dbReference type="InterPro" id="IPR050354">
    <property type="entry name" value="F-box/kelch-repeat_ARATH"/>
</dbReference>
<dbReference type="InterPro" id="IPR001810">
    <property type="entry name" value="F-box_dom"/>
</dbReference>
<dbReference type="InterPro" id="IPR015915">
    <property type="entry name" value="Kelch-typ_b-propeller"/>
</dbReference>
<dbReference type="PANTHER" id="PTHR24414">
    <property type="entry name" value="F-BOX/KELCH-REPEAT PROTEIN SKIP4"/>
    <property type="match status" value="1"/>
</dbReference>
<dbReference type="PANTHER" id="PTHR24414:SF184">
    <property type="entry name" value="GALACTOSE OXIDASE_KELCH REPEAT SUPERFAMILY PROTEIN"/>
    <property type="match status" value="1"/>
</dbReference>
<dbReference type="Pfam" id="PF00646">
    <property type="entry name" value="F-box"/>
    <property type="match status" value="1"/>
</dbReference>
<dbReference type="Pfam" id="PF25210">
    <property type="entry name" value="Kelch_FKB95"/>
    <property type="match status" value="1"/>
</dbReference>
<dbReference type="SMART" id="SM00256">
    <property type="entry name" value="FBOX"/>
    <property type="match status" value="1"/>
</dbReference>
<dbReference type="SUPFAM" id="SSF81383">
    <property type="entry name" value="F-box domain"/>
    <property type="match status" value="1"/>
</dbReference>
<dbReference type="SUPFAM" id="SSF117281">
    <property type="entry name" value="Kelch motif"/>
    <property type="match status" value="1"/>
</dbReference>
<dbReference type="PROSITE" id="PS50181">
    <property type="entry name" value="FBOX"/>
    <property type="match status" value="1"/>
</dbReference>
<proteinExistence type="evidence at transcript level"/>
<organism>
    <name type="scientific">Arabidopsis thaliana</name>
    <name type="common">Mouse-ear cress</name>
    <dbReference type="NCBI Taxonomy" id="3702"/>
    <lineage>
        <taxon>Eukaryota</taxon>
        <taxon>Viridiplantae</taxon>
        <taxon>Streptophyta</taxon>
        <taxon>Embryophyta</taxon>
        <taxon>Tracheophyta</taxon>
        <taxon>Spermatophyta</taxon>
        <taxon>Magnoliopsida</taxon>
        <taxon>eudicotyledons</taxon>
        <taxon>Gunneridae</taxon>
        <taxon>Pentapetalae</taxon>
        <taxon>rosids</taxon>
        <taxon>malvids</taxon>
        <taxon>Brassicales</taxon>
        <taxon>Brassicaceae</taxon>
        <taxon>Camelineae</taxon>
        <taxon>Arabidopsis</taxon>
    </lineage>
</organism>